<protein>
    <recommendedName>
        <fullName>Orotidine 5'-phosphate decarboxylase</fullName>
        <ecNumber>4.1.1.23</ecNumber>
    </recommendedName>
    <alternativeName>
        <fullName>OMP decarboxylase</fullName>
        <shortName>OMPDCase</shortName>
        <shortName>OMPdecase</shortName>
    </alternativeName>
    <alternativeName>
        <fullName>Uridine 5'-monophosphate synthase</fullName>
        <shortName>UMP synthase</shortName>
    </alternativeName>
</protein>
<proteinExistence type="inferred from homology"/>
<name>PYRF_MAUEX</name>
<evidence type="ECO:0000250" key="1"/>
<evidence type="ECO:0000255" key="2">
    <source>
        <dbReference type="PROSITE-ProRule" id="PRU10110"/>
    </source>
</evidence>
<evidence type="ECO:0000305" key="3"/>
<gene>
    <name type="primary">URA4</name>
</gene>
<accession>Q9Y726</accession>
<feature type="chain" id="PRO_0000134680" description="Orotidine 5'-phosphate decarboxylase">
    <location>
        <begin position="1"/>
        <end position="268"/>
    </location>
</feature>
<feature type="active site" description="Proton donor" evidence="2">
    <location>
        <position position="93"/>
    </location>
</feature>
<feature type="binding site" evidence="1">
    <location>
        <position position="37"/>
    </location>
    <ligand>
        <name>substrate</name>
    </ligand>
</feature>
<feature type="binding site" evidence="1">
    <location>
        <begin position="59"/>
        <end position="61"/>
    </location>
    <ligand>
        <name>substrate</name>
    </ligand>
</feature>
<feature type="binding site" evidence="1">
    <location>
        <begin position="91"/>
        <end position="100"/>
    </location>
    <ligand>
        <name>substrate</name>
    </ligand>
</feature>
<feature type="binding site" evidence="1">
    <location>
        <position position="217"/>
    </location>
    <ligand>
        <name>substrate</name>
    </ligand>
</feature>
<feature type="binding site" evidence="1">
    <location>
        <position position="235"/>
    </location>
    <ligand>
        <name>substrate</name>
    </ligand>
</feature>
<sequence length="268" mass="29187">MAFATYEERASVHASPVASKLLRIMASKKTNLCASLDVRTTAELLSLVDQVGPYICLLKTHVDILDDFSMEGTVKPLKELAAKYNFLIFEDRKFADIGNTVKLQYSSGVYKIVQWADITNAHGVTGSGIVKGLKEAAQENSDEPRGLLMLAELSSKGSLAHGEYTTGTVEIAKTDKQFVFGFIAQRGMGGRDEGFDWLIMTPGVGLDDKGDALGQQYRTVDDVVSTGSDIIIVGRGLFGKGRDPTAESRRYRDAGWDAYLKRCNAASN</sequence>
<organism>
    <name type="scientific">Maudiozyma exigua</name>
    <name type="common">Yeast</name>
    <name type="synonym">Kazachstania exigua</name>
    <dbReference type="NCBI Taxonomy" id="34358"/>
    <lineage>
        <taxon>Eukaryota</taxon>
        <taxon>Fungi</taxon>
        <taxon>Dikarya</taxon>
        <taxon>Ascomycota</taxon>
        <taxon>Saccharomycotina</taxon>
        <taxon>Saccharomycetes</taxon>
        <taxon>Saccharomycetales</taxon>
        <taxon>Saccharomycetaceae</taxon>
        <taxon>Maudiozyma</taxon>
    </lineage>
</organism>
<reference key="1">
    <citation type="journal article" date="2000" name="Curr. Microbiol.">
        <title>Molecular cloning and DNA analysis of the orotidine-5'-phosphate decarboxylase gene from the yeast Saccharomyces exiguus Yp74L-3.</title>
        <authorList>
            <person name="Hisatomi T."/>
            <person name="Kodama T."/>
            <person name="Toba H."/>
            <person name="Moto-oka M."/>
            <person name="Watanabe A."/>
            <person name="Tsuboi M."/>
        </authorList>
    </citation>
    <scope>NUCLEOTIDE SEQUENCE [GENOMIC DNA]</scope>
    <source>
        <strain>Yp74L-3</strain>
    </source>
</reference>
<comment type="catalytic activity">
    <reaction evidence="2">
        <text>orotidine 5'-phosphate + H(+) = UMP + CO2</text>
        <dbReference type="Rhea" id="RHEA:11596"/>
        <dbReference type="ChEBI" id="CHEBI:15378"/>
        <dbReference type="ChEBI" id="CHEBI:16526"/>
        <dbReference type="ChEBI" id="CHEBI:57538"/>
        <dbReference type="ChEBI" id="CHEBI:57865"/>
        <dbReference type="EC" id="4.1.1.23"/>
    </reaction>
</comment>
<comment type="pathway">
    <text>Pyrimidine metabolism; UMP biosynthesis via de novo pathway; UMP from orotate: step 2/2.</text>
</comment>
<comment type="similarity">
    <text evidence="3">Belongs to the OMP decarboxylase family.</text>
</comment>
<dbReference type="EC" id="4.1.1.23"/>
<dbReference type="EMBL" id="AB021640">
    <property type="protein sequence ID" value="BAA76736.1"/>
    <property type="molecule type" value="Genomic_DNA"/>
</dbReference>
<dbReference type="SMR" id="Q9Y726"/>
<dbReference type="UniPathway" id="UPA00070">
    <property type="reaction ID" value="UER00120"/>
</dbReference>
<dbReference type="GO" id="GO:0005829">
    <property type="term" value="C:cytosol"/>
    <property type="evidence" value="ECO:0007669"/>
    <property type="project" value="TreeGrafter"/>
</dbReference>
<dbReference type="GO" id="GO:0004590">
    <property type="term" value="F:orotidine-5'-phosphate decarboxylase activity"/>
    <property type="evidence" value="ECO:0007669"/>
    <property type="project" value="UniProtKB-EC"/>
</dbReference>
<dbReference type="GO" id="GO:0006207">
    <property type="term" value="P:'de novo' pyrimidine nucleobase biosynthetic process"/>
    <property type="evidence" value="ECO:0007669"/>
    <property type="project" value="InterPro"/>
</dbReference>
<dbReference type="GO" id="GO:0044205">
    <property type="term" value="P:'de novo' UMP biosynthetic process"/>
    <property type="evidence" value="ECO:0007669"/>
    <property type="project" value="UniProtKB-UniPathway"/>
</dbReference>
<dbReference type="CDD" id="cd04725">
    <property type="entry name" value="OMP_decarboxylase_like"/>
    <property type="match status" value="1"/>
</dbReference>
<dbReference type="FunFam" id="3.20.20.70:FF:000114">
    <property type="entry name" value="Decarboxylase,orotidine phosphate"/>
    <property type="match status" value="1"/>
</dbReference>
<dbReference type="Gene3D" id="3.20.20.70">
    <property type="entry name" value="Aldolase class I"/>
    <property type="match status" value="1"/>
</dbReference>
<dbReference type="InterPro" id="IPR013785">
    <property type="entry name" value="Aldolase_TIM"/>
</dbReference>
<dbReference type="InterPro" id="IPR014732">
    <property type="entry name" value="OMPdecase"/>
</dbReference>
<dbReference type="InterPro" id="IPR018089">
    <property type="entry name" value="OMPdecase_AS"/>
</dbReference>
<dbReference type="InterPro" id="IPR001754">
    <property type="entry name" value="OMPdeCOase_dom"/>
</dbReference>
<dbReference type="InterPro" id="IPR011060">
    <property type="entry name" value="RibuloseP-bd_barrel"/>
</dbReference>
<dbReference type="NCBIfam" id="TIGR01740">
    <property type="entry name" value="pyrF"/>
    <property type="match status" value="1"/>
</dbReference>
<dbReference type="PANTHER" id="PTHR32119">
    <property type="entry name" value="OROTIDINE 5'-PHOSPHATE DECARBOXYLASE"/>
    <property type="match status" value="1"/>
</dbReference>
<dbReference type="PANTHER" id="PTHR32119:SF2">
    <property type="entry name" value="OROTIDINE 5'-PHOSPHATE DECARBOXYLASE"/>
    <property type="match status" value="1"/>
</dbReference>
<dbReference type="Pfam" id="PF00215">
    <property type="entry name" value="OMPdecase"/>
    <property type="match status" value="1"/>
</dbReference>
<dbReference type="SMART" id="SM00934">
    <property type="entry name" value="OMPdecase"/>
    <property type="match status" value="1"/>
</dbReference>
<dbReference type="SUPFAM" id="SSF51366">
    <property type="entry name" value="Ribulose-phoshate binding barrel"/>
    <property type="match status" value="1"/>
</dbReference>
<dbReference type="PROSITE" id="PS00156">
    <property type="entry name" value="OMPDECASE"/>
    <property type="match status" value="1"/>
</dbReference>
<keyword id="KW-0210">Decarboxylase</keyword>
<keyword id="KW-0456">Lyase</keyword>
<keyword id="KW-0665">Pyrimidine biosynthesis</keyword>